<proteinExistence type="evidence at transcript level"/>
<dbReference type="EMBL" id="AE014134">
    <property type="protein sequence ID" value="AAF52737.2"/>
    <property type="molecule type" value="Genomic_DNA"/>
</dbReference>
<dbReference type="EMBL" id="AY119228">
    <property type="protein sequence ID" value="AAM51088.1"/>
    <property type="molecule type" value="mRNA"/>
</dbReference>
<dbReference type="RefSeq" id="NP_652562.2">
    <property type="nucleotide sequence ID" value="NM_144305.5"/>
</dbReference>
<dbReference type="SMR" id="Q9VLF6"/>
<dbReference type="FunCoup" id="Q9VLF6">
    <property type="interactions" value="155"/>
</dbReference>
<dbReference type="STRING" id="7227.FBpp0079364"/>
<dbReference type="PaxDb" id="7227-FBpp0079364"/>
<dbReference type="EnsemblMetazoa" id="FBtr0079763">
    <property type="protein sequence ID" value="FBpp0079364"/>
    <property type="gene ID" value="FBgn0040964"/>
</dbReference>
<dbReference type="GeneID" id="50438"/>
<dbReference type="KEGG" id="dme:Dmel_CG18661"/>
<dbReference type="UCSC" id="CG18661-RA">
    <property type="organism name" value="d. melanogaster"/>
</dbReference>
<dbReference type="AGR" id="FB:FBgn0040964"/>
<dbReference type="FlyBase" id="FBgn0040964">
    <property type="gene designation" value="CG18661"/>
</dbReference>
<dbReference type="VEuPathDB" id="VectorBase:FBgn0040964"/>
<dbReference type="eggNOG" id="ENOG502QVX9">
    <property type="taxonomic scope" value="Eukaryota"/>
</dbReference>
<dbReference type="GeneTree" id="ENSGT00390000010750"/>
<dbReference type="HOGENOM" id="CLU_067698_0_0_1"/>
<dbReference type="InParanoid" id="Q9VLF6"/>
<dbReference type="OMA" id="YLYGPYK"/>
<dbReference type="OrthoDB" id="10258744at2759"/>
<dbReference type="PhylomeDB" id="Q9VLF6"/>
<dbReference type="BioGRID-ORCS" id="50438">
    <property type="hits" value="0 hits in 1 CRISPR screen"/>
</dbReference>
<dbReference type="GenomeRNAi" id="50438"/>
<dbReference type="PRO" id="PR:Q9VLF6"/>
<dbReference type="Proteomes" id="UP000000803">
    <property type="component" value="Chromosome 2L"/>
</dbReference>
<dbReference type="Bgee" id="FBgn0040964">
    <property type="expression patterns" value="Expressed in adult anterior midgut class I enteroendocrine cell in adult midgut (Drosophila) and 46 other cell types or tissues"/>
</dbReference>
<dbReference type="ExpressionAtlas" id="Q9VLF6">
    <property type="expression patterns" value="baseline and differential"/>
</dbReference>
<dbReference type="GO" id="GO:0008168">
    <property type="term" value="F:methyltransferase activity"/>
    <property type="evidence" value="ECO:0000255"/>
    <property type="project" value="FlyBase"/>
</dbReference>
<dbReference type="Gene3D" id="3.40.50.150">
    <property type="entry name" value="Vaccinia Virus protein VP39"/>
    <property type="match status" value="1"/>
</dbReference>
<dbReference type="InterPro" id="IPR010342">
    <property type="entry name" value="DUF938"/>
</dbReference>
<dbReference type="InterPro" id="IPR029063">
    <property type="entry name" value="SAM-dependent_MTases_sf"/>
</dbReference>
<dbReference type="PANTHER" id="PTHR20974">
    <property type="entry name" value="UPF0585 PROTEIN CG18661"/>
    <property type="match status" value="1"/>
</dbReference>
<dbReference type="PANTHER" id="PTHR20974:SF0">
    <property type="entry name" value="UPF0585 PROTEIN CG18661"/>
    <property type="match status" value="1"/>
</dbReference>
<dbReference type="Pfam" id="PF06080">
    <property type="entry name" value="DUF938"/>
    <property type="match status" value="1"/>
</dbReference>
<dbReference type="SUPFAM" id="SSF53335">
    <property type="entry name" value="S-adenosyl-L-methionine-dependent methyltransferases"/>
    <property type="match status" value="1"/>
</dbReference>
<gene>
    <name type="ORF">CG18661</name>
</gene>
<organism>
    <name type="scientific">Drosophila melanogaster</name>
    <name type="common">Fruit fly</name>
    <dbReference type="NCBI Taxonomy" id="7227"/>
    <lineage>
        <taxon>Eukaryota</taxon>
        <taxon>Metazoa</taxon>
        <taxon>Ecdysozoa</taxon>
        <taxon>Arthropoda</taxon>
        <taxon>Hexapoda</taxon>
        <taxon>Insecta</taxon>
        <taxon>Pterygota</taxon>
        <taxon>Neoptera</taxon>
        <taxon>Endopterygota</taxon>
        <taxon>Diptera</taxon>
        <taxon>Brachycera</taxon>
        <taxon>Muscomorpha</taxon>
        <taxon>Ephydroidea</taxon>
        <taxon>Drosophilidae</taxon>
        <taxon>Drosophila</taxon>
        <taxon>Sophophora</taxon>
    </lineage>
</organism>
<sequence length="222" mass="24887">MSLTKRLLHIHPRCSFSKRSHPSADRNSQPISEALLSQVDKTTENLQLLEIASGSGQHAGFLAPLLPNITFQPTEYERNQFGSIAAYAGDCPTRNIRPPFHVDITRDPGDWEAPPAPASYDYMFNSNMMHISPWSCSIGLFRAAGQLLKKGGRMFTYGPYAQDGILVPQSNVDFDRSLRQRDASWGVRDIKDLKVLAAENGLQLEKLVKMPSNNKFLTWLKL</sequence>
<reference key="1">
    <citation type="journal article" date="2000" name="Science">
        <title>The genome sequence of Drosophila melanogaster.</title>
        <authorList>
            <person name="Adams M.D."/>
            <person name="Celniker S.E."/>
            <person name="Holt R.A."/>
            <person name="Evans C.A."/>
            <person name="Gocayne J.D."/>
            <person name="Amanatides P.G."/>
            <person name="Scherer S.E."/>
            <person name="Li P.W."/>
            <person name="Hoskins R.A."/>
            <person name="Galle R.F."/>
            <person name="George R.A."/>
            <person name="Lewis S.E."/>
            <person name="Richards S."/>
            <person name="Ashburner M."/>
            <person name="Henderson S.N."/>
            <person name="Sutton G.G."/>
            <person name="Wortman J.R."/>
            <person name="Yandell M.D."/>
            <person name="Zhang Q."/>
            <person name="Chen L.X."/>
            <person name="Brandon R.C."/>
            <person name="Rogers Y.-H.C."/>
            <person name="Blazej R.G."/>
            <person name="Champe M."/>
            <person name="Pfeiffer B.D."/>
            <person name="Wan K.H."/>
            <person name="Doyle C."/>
            <person name="Baxter E.G."/>
            <person name="Helt G."/>
            <person name="Nelson C.R."/>
            <person name="Miklos G.L.G."/>
            <person name="Abril J.F."/>
            <person name="Agbayani A."/>
            <person name="An H.-J."/>
            <person name="Andrews-Pfannkoch C."/>
            <person name="Baldwin D."/>
            <person name="Ballew R.M."/>
            <person name="Basu A."/>
            <person name="Baxendale J."/>
            <person name="Bayraktaroglu L."/>
            <person name="Beasley E.M."/>
            <person name="Beeson K.Y."/>
            <person name="Benos P.V."/>
            <person name="Berman B.P."/>
            <person name="Bhandari D."/>
            <person name="Bolshakov S."/>
            <person name="Borkova D."/>
            <person name="Botchan M.R."/>
            <person name="Bouck J."/>
            <person name="Brokstein P."/>
            <person name="Brottier P."/>
            <person name="Burtis K.C."/>
            <person name="Busam D.A."/>
            <person name="Butler H."/>
            <person name="Cadieu E."/>
            <person name="Center A."/>
            <person name="Chandra I."/>
            <person name="Cherry J.M."/>
            <person name="Cawley S."/>
            <person name="Dahlke C."/>
            <person name="Davenport L.B."/>
            <person name="Davies P."/>
            <person name="de Pablos B."/>
            <person name="Delcher A."/>
            <person name="Deng Z."/>
            <person name="Mays A.D."/>
            <person name="Dew I."/>
            <person name="Dietz S.M."/>
            <person name="Dodson K."/>
            <person name="Doup L.E."/>
            <person name="Downes M."/>
            <person name="Dugan-Rocha S."/>
            <person name="Dunkov B.C."/>
            <person name="Dunn P."/>
            <person name="Durbin K.J."/>
            <person name="Evangelista C.C."/>
            <person name="Ferraz C."/>
            <person name="Ferriera S."/>
            <person name="Fleischmann W."/>
            <person name="Fosler C."/>
            <person name="Gabrielian A.E."/>
            <person name="Garg N.S."/>
            <person name="Gelbart W.M."/>
            <person name="Glasser K."/>
            <person name="Glodek A."/>
            <person name="Gong F."/>
            <person name="Gorrell J.H."/>
            <person name="Gu Z."/>
            <person name="Guan P."/>
            <person name="Harris M."/>
            <person name="Harris N.L."/>
            <person name="Harvey D.A."/>
            <person name="Heiman T.J."/>
            <person name="Hernandez J.R."/>
            <person name="Houck J."/>
            <person name="Hostin D."/>
            <person name="Houston K.A."/>
            <person name="Howland T.J."/>
            <person name="Wei M.-H."/>
            <person name="Ibegwam C."/>
            <person name="Jalali M."/>
            <person name="Kalush F."/>
            <person name="Karpen G.H."/>
            <person name="Ke Z."/>
            <person name="Kennison J.A."/>
            <person name="Ketchum K.A."/>
            <person name="Kimmel B.E."/>
            <person name="Kodira C.D."/>
            <person name="Kraft C.L."/>
            <person name="Kravitz S."/>
            <person name="Kulp D."/>
            <person name="Lai Z."/>
            <person name="Lasko P."/>
            <person name="Lei Y."/>
            <person name="Levitsky A.A."/>
            <person name="Li J.H."/>
            <person name="Li Z."/>
            <person name="Liang Y."/>
            <person name="Lin X."/>
            <person name="Liu X."/>
            <person name="Mattei B."/>
            <person name="McIntosh T.C."/>
            <person name="McLeod M.P."/>
            <person name="McPherson D."/>
            <person name="Merkulov G."/>
            <person name="Milshina N.V."/>
            <person name="Mobarry C."/>
            <person name="Morris J."/>
            <person name="Moshrefi A."/>
            <person name="Mount S.M."/>
            <person name="Moy M."/>
            <person name="Murphy B."/>
            <person name="Murphy L."/>
            <person name="Muzny D.M."/>
            <person name="Nelson D.L."/>
            <person name="Nelson D.R."/>
            <person name="Nelson K.A."/>
            <person name="Nixon K."/>
            <person name="Nusskern D.R."/>
            <person name="Pacleb J.M."/>
            <person name="Palazzolo M."/>
            <person name="Pittman G.S."/>
            <person name="Pan S."/>
            <person name="Pollard J."/>
            <person name="Puri V."/>
            <person name="Reese M.G."/>
            <person name="Reinert K."/>
            <person name="Remington K."/>
            <person name="Saunders R.D.C."/>
            <person name="Scheeler F."/>
            <person name="Shen H."/>
            <person name="Shue B.C."/>
            <person name="Siden-Kiamos I."/>
            <person name="Simpson M."/>
            <person name="Skupski M.P."/>
            <person name="Smith T.J."/>
            <person name="Spier E."/>
            <person name="Spradling A.C."/>
            <person name="Stapleton M."/>
            <person name="Strong R."/>
            <person name="Sun E."/>
            <person name="Svirskas R."/>
            <person name="Tector C."/>
            <person name="Turner R."/>
            <person name="Venter E."/>
            <person name="Wang A.H."/>
            <person name="Wang X."/>
            <person name="Wang Z.-Y."/>
            <person name="Wassarman D.A."/>
            <person name="Weinstock G.M."/>
            <person name="Weissenbach J."/>
            <person name="Williams S.M."/>
            <person name="Woodage T."/>
            <person name="Worley K.C."/>
            <person name="Wu D."/>
            <person name="Yang S."/>
            <person name="Yao Q.A."/>
            <person name="Ye J."/>
            <person name="Yeh R.-F."/>
            <person name="Zaveri J.S."/>
            <person name="Zhan M."/>
            <person name="Zhang G."/>
            <person name="Zhao Q."/>
            <person name="Zheng L."/>
            <person name="Zheng X.H."/>
            <person name="Zhong F.N."/>
            <person name="Zhong W."/>
            <person name="Zhou X."/>
            <person name="Zhu S.C."/>
            <person name="Zhu X."/>
            <person name="Smith H.O."/>
            <person name="Gibbs R.A."/>
            <person name="Myers E.W."/>
            <person name="Rubin G.M."/>
            <person name="Venter J.C."/>
        </authorList>
    </citation>
    <scope>NUCLEOTIDE SEQUENCE [LARGE SCALE GENOMIC DNA]</scope>
    <source>
        <strain>Berkeley</strain>
    </source>
</reference>
<reference key="2">
    <citation type="journal article" date="2002" name="Genome Biol.">
        <title>Annotation of the Drosophila melanogaster euchromatic genome: a systematic review.</title>
        <authorList>
            <person name="Misra S."/>
            <person name="Crosby M.A."/>
            <person name="Mungall C.J."/>
            <person name="Matthews B.B."/>
            <person name="Campbell K.S."/>
            <person name="Hradecky P."/>
            <person name="Huang Y."/>
            <person name="Kaminker J.S."/>
            <person name="Millburn G.H."/>
            <person name="Prochnik S.E."/>
            <person name="Smith C.D."/>
            <person name="Tupy J.L."/>
            <person name="Whitfield E.J."/>
            <person name="Bayraktaroglu L."/>
            <person name="Berman B.P."/>
            <person name="Bettencourt B.R."/>
            <person name="Celniker S.E."/>
            <person name="de Grey A.D.N.J."/>
            <person name="Drysdale R.A."/>
            <person name="Harris N.L."/>
            <person name="Richter J."/>
            <person name="Russo S."/>
            <person name="Schroeder A.J."/>
            <person name="Shu S.Q."/>
            <person name="Stapleton M."/>
            <person name="Yamada C."/>
            <person name="Ashburner M."/>
            <person name="Gelbart W.M."/>
            <person name="Rubin G.M."/>
            <person name="Lewis S.E."/>
        </authorList>
    </citation>
    <scope>GENOME REANNOTATION</scope>
    <source>
        <strain>Berkeley</strain>
    </source>
</reference>
<reference key="3">
    <citation type="journal article" date="2002" name="Genome Biol.">
        <title>A Drosophila full-length cDNA resource.</title>
        <authorList>
            <person name="Stapleton M."/>
            <person name="Carlson J.W."/>
            <person name="Brokstein P."/>
            <person name="Yu C."/>
            <person name="Champe M."/>
            <person name="George R.A."/>
            <person name="Guarin H."/>
            <person name="Kronmiller B."/>
            <person name="Pacleb J.M."/>
            <person name="Park S."/>
            <person name="Wan K.H."/>
            <person name="Rubin G.M."/>
            <person name="Celniker S.E."/>
        </authorList>
    </citation>
    <scope>NUCLEOTIDE SEQUENCE [LARGE SCALE MRNA]</scope>
    <source>
        <strain>Berkeley</strain>
        <tissue>Embryo</tissue>
    </source>
</reference>
<name>U585_DROME</name>
<keyword id="KW-1185">Reference proteome</keyword>
<comment type="similarity">
    <text evidence="1">Belongs to the UPF0585 family.</text>
</comment>
<evidence type="ECO:0000305" key="1"/>
<protein>
    <recommendedName>
        <fullName>UPF0585 protein CG18661</fullName>
    </recommendedName>
</protein>
<accession>Q9VLF6</accession>
<accession>Q8MRW6</accession>
<feature type="chain" id="PRO_0000337121" description="UPF0585 protein CG18661">
    <location>
        <begin position="1"/>
        <end position="222"/>
    </location>
</feature>
<feature type="sequence conflict" description="In Ref. 3; AAM51088." evidence="1" ref="3">
    <original>TE</original>
    <variation>SQ</variation>
    <location>
        <begin position="43"/>
        <end position="44"/>
    </location>
</feature>
<feature type="sequence conflict" description="In Ref. 3; AAM51088." evidence="1" ref="3">
    <original>S</original>
    <variation>A</variation>
    <location>
        <position position="135"/>
    </location>
</feature>
<feature type="sequence conflict" description="In Ref. 3; AAM51088." evidence="1" ref="3">
    <original>K</original>
    <variation>E</variation>
    <location>
        <position position="209"/>
    </location>
</feature>